<gene>
    <name evidence="1" type="primary">dtd</name>
    <name type="ordered locus">Tgr7_0209</name>
</gene>
<name>DTD_THISH</name>
<comment type="function">
    <text evidence="1">An aminoacyl-tRNA editing enzyme that deacylates mischarged D-aminoacyl-tRNAs. Also deacylates mischarged glycyl-tRNA(Ala), protecting cells against glycine mischarging by AlaRS. Acts via tRNA-based rather than protein-based catalysis; rejects L-amino acids rather than detecting D-amino acids in the active site. By recycling D-aminoacyl-tRNA to D-amino acids and free tRNA molecules, this enzyme counteracts the toxicity associated with the formation of D-aminoacyl-tRNA entities in vivo and helps enforce protein L-homochirality.</text>
</comment>
<comment type="catalytic activity">
    <reaction evidence="1">
        <text>glycyl-tRNA(Ala) + H2O = tRNA(Ala) + glycine + H(+)</text>
        <dbReference type="Rhea" id="RHEA:53744"/>
        <dbReference type="Rhea" id="RHEA-COMP:9657"/>
        <dbReference type="Rhea" id="RHEA-COMP:13640"/>
        <dbReference type="ChEBI" id="CHEBI:15377"/>
        <dbReference type="ChEBI" id="CHEBI:15378"/>
        <dbReference type="ChEBI" id="CHEBI:57305"/>
        <dbReference type="ChEBI" id="CHEBI:78442"/>
        <dbReference type="ChEBI" id="CHEBI:78522"/>
        <dbReference type="EC" id="3.1.1.96"/>
    </reaction>
</comment>
<comment type="catalytic activity">
    <reaction evidence="1">
        <text>a D-aminoacyl-tRNA + H2O = a tRNA + a D-alpha-amino acid + H(+)</text>
        <dbReference type="Rhea" id="RHEA:13953"/>
        <dbReference type="Rhea" id="RHEA-COMP:10123"/>
        <dbReference type="Rhea" id="RHEA-COMP:10124"/>
        <dbReference type="ChEBI" id="CHEBI:15377"/>
        <dbReference type="ChEBI" id="CHEBI:15378"/>
        <dbReference type="ChEBI" id="CHEBI:59871"/>
        <dbReference type="ChEBI" id="CHEBI:78442"/>
        <dbReference type="ChEBI" id="CHEBI:79333"/>
        <dbReference type="EC" id="3.1.1.96"/>
    </reaction>
</comment>
<comment type="subunit">
    <text evidence="1">Homodimer.</text>
</comment>
<comment type="subcellular location">
    <subcellularLocation>
        <location evidence="1">Cytoplasm</location>
    </subcellularLocation>
</comment>
<comment type="domain">
    <text evidence="1">A Gly-cisPro motif from one monomer fits into the active site of the other monomer to allow specific chiral rejection of L-amino acids.</text>
</comment>
<comment type="similarity">
    <text evidence="1">Belongs to the DTD family.</text>
</comment>
<evidence type="ECO:0000255" key="1">
    <source>
        <dbReference type="HAMAP-Rule" id="MF_00518"/>
    </source>
</evidence>
<feature type="chain" id="PRO_1000146221" description="D-aminoacyl-tRNA deacylase">
    <location>
        <begin position="1"/>
        <end position="149"/>
    </location>
</feature>
<feature type="short sequence motif" description="Gly-cisPro motif, important for rejection of L-amino acids" evidence="1">
    <location>
        <begin position="137"/>
        <end position="138"/>
    </location>
</feature>
<reference key="1">
    <citation type="journal article" date="2011" name="Stand. Genomic Sci.">
        <title>Complete genome sequence of 'Thioalkalivibrio sulfidophilus' HL-EbGr7.</title>
        <authorList>
            <person name="Muyzer G."/>
            <person name="Sorokin D.Y."/>
            <person name="Mavromatis K."/>
            <person name="Lapidus A."/>
            <person name="Clum A."/>
            <person name="Ivanova N."/>
            <person name="Pati A."/>
            <person name="d'Haeseleer P."/>
            <person name="Woyke T."/>
            <person name="Kyrpides N.C."/>
        </authorList>
    </citation>
    <scope>NUCLEOTIDE SEQUENCE [LARGE SCALE GENOMIC DNA]</scope>
    <source>
        <strain>HL-EbGR7</strain>
    </source>
</reference>
<keyword id="KW-0963">Cytoplasm</keyword>
<keyword id="KW-0378">Hydrolase</keyword>
<keyword id="KW-1185">Reference proteome</keyword>
<keyword id="KW-0694">RNA-binding</keyword>
<keyword id="KW-0820">tRNA-binding</keyword>
<organism>
    <name type="scientific">Thioalkalivibrio sulfidiphilus (strain HL-EbGR7)</name>
    <dbReference type="NCBI Taxonomy" id="396588"/>
    <lineage>
        <taxon>Bacteria</taxon>
        <taxon>Pseudomonadati</taxon>
        <taxon>Pseudomonadota</taxon>
        <taxon>Gammaproteobacteria</taxon>
        <taxon>Chromatiales</taxon>
        <taxon>Ectothiorhodospiraceae</taxon>
        <taxon>Thioalkalivibrio</taxon>
    </lineage>
</organism>
<sequence>MIALLQRVSEAAVRVDGETVGAIGPGILALIGVQRGDTEAQAARLLERILGYRLFEDEAGRMNLSLSDTGGGLLLVPQFTLAADTRKGMRASFTPAAEPGLGRALFDHLVSLACSVHTPVATGCFGAHMAVSLVNDGPVTFWLEVPPPR</sequence>
<proteinExistence type="inferred from homology"/>
<dbReference type="EC" id="3.1.1.96" evidence="1"/>
<dbReference type="EMBL" id="CP001339">
    <property type="protein sequence ID" value="ACL71308.1"/>
    <property type="molecule type" value="Genomic_DNA"/>
</dbReference>
<dbReference type="RefSeq" id="WP_012636797.1">
    <property type="nucleotide sequence ID" value="NC_011901.1"/>
</dbReference>
<dbReference type="SMR" id="B8GU25"/>
<dbReference type="STRING" id="396588.Tgr7_0209"/>
<dbReference type="KEGG" id="tgr:Tgr7_0209"/>
<dbReference type="eggNOG" id="COG1490">
    <property type="taxonomic scope" value="Bacteria"/>
</dbReference>
<dbReference type="HOGENOM" id="CLU_076901_1_1_6"/>
<dbReference type="OrthoDB" id="9801395at2"/>
<dbReference type="Proteomes" id="UP000002383">
    <property type="component" value="Chromosome"/>
</dbReference>
<dbReference type="GO" id="GO:0005737">
    <property type="term" value="C:cytoplasm"/>
    <property type="evidence" value="ECO:0007669"/>
    <property type="project" value="UniProtKB-SubCell"/>
</dbReference>
<dbReference type="GO" id="GO:0051500">
    <property type="term" value="F:D-tyrosyl-tRNA(Tyr) deacylase activity"/>
    <property type="evidence" value="ECO:0007669"/>
    <property type="project" value="TreeGrafter"/>
</dbReference>
<dbReference type="GO" id="GO:0106026">
    <property type="term" value="F:Gly-tRNA(Ala) deacylase activity"/>
    <property type="evidence" value="ECO:0007669"/>
    <property type="project" value="UniProtKB-UniRule"/>
</dbReference>
<dbReference type="GO" id="GO:0043908">
    <property type="term" value="F:Ser(Gly)-tRNA(Ala) hydrolase activity"/>
    <property type="evidence" value="ECO:0007669"/>
    <property type="project" value="UniProtKB-UniRule"/>
</dbReference>
<dbReference type="GO" id="GO:0000049">
    <property type="term" value="F:tRNA binding"/>
    <property type="evidence" value="ECO:0007669"/>
    <property type="project" value="UniProtKB-UniRule"/>
</dbReference>
<dbReference type="GO" id="GO:0019478">
    <property type="term" value="P:D-amino acid catabolic process"/>
    <property type="evidence" value="ECO:0007669"/>
    <property type="project" value="UniProtKB-UniRule"/>
</dbReference>
<dbReference type="CDD" id="cd00563">
    <property type="entry name" value="Dtyr_deacylase"/>
    <property type="match status" value="1"/>
</dbReference>
<dbReference type="FunFam" id="3.50.80.10:FF:000001">
    <property type="entry name" value="D-aminoacyl-tRNA deacylase"/>
    <property type="match status" value="1"/>
</dbReference>
<dbReference type="Gene3D" id="3.50.80.10">
    <property type="entry name" value="D-tyrosyl-tRNA(Tyr) deacylase"/>
    <property type="match status" value="1"/>
</dbReference>
<dbReference type="HAMAP" id="MF_00518">
    <property type="entry name" value="Deacylase_Dtd"/>
    <property type="match status" value="1"/>
</dbReference>
<dbReference type="InterPro" id="IPR003732">
    <property type="entry name" value="Daa-tRNA_deacyls_DTD"/>
</dbReference>
<dbReference type="InterPro" id="IPR023509">
    <property type="entry name" value="DTD-like_sf"/>
</dbReference>
<dbReference type="NCBIfam" id="TIGR00256">
    <property type="entry name" value="D-aminoacyl-tRNA deacylase"/>
    <property type="match status" value="1"/>
</dbReference>
<dbReference type="PANTHER" id="PTHR10472:SF5">
    <property type="entry name" value="D-AMINOACYL-TRNA DEACYLASE 1"/>
    <property type="match status" value="1"/>
</dbReference>
<dbReference type="PANTHER" id="PTHR10472">
    <property type="entry name" value="D-TYROSYL-TRNA TYR DEACYLASE"/>
    <property type="match status" value="1"/>
</dbReference>
<dbReference type="Pfam" id="PF02580">
    <property type="entry name" value="Tyr_Deacylase"/>
    <property type="match status" value="1"/>
</dbReference>
<dbReference type="SUPFAM" id="SSF69500">
    <property type="entry name" value="DTD-like"/>
    <property type="match status" value="1"/>
</dbReference>
<protein>
    <recommendedName>
        <fullName evidence="1">D-aminoacyl-tRNA deacylase</fullName>
        <shortName evidence="1">DTD</shortName>
        <ecNumber evidence="1">3.1.1.96</ecNumber>
    </recommendedName>
    <alternativeName>
        <fullName evidence="1">Gly-tRNA(Ala) deacylase</fullName>
    </alternativeName>
</protein>
<accession>B8GU25</accession>